<feature type="initiator methionine" description="Removed" evidence="1">
    <location>
        <position position="1"/>
    </location>
</feature>
<feature type="chain" id="PRO_0000164142" description="Superoxide dismutase [Cu-Zn] 4A">
    <location>
        <begin position="2"/>
        <end position="152"/>
    </location>
</feature>
<feature type="binding site" evidence="1">
    <location>
        <position position="45"/>
    </location>
    <ligand>
        <name>Cu cation</name>
        <dbReference type="ChEBI" id="CHEBI:23378"/>
        <note>catalytic</note>
    </ligand>
</feature>
<feature type="binding site" evidence="1">
    <location>
        <position position="47"/>
    </location>
    <ligand>
        <name>Cu cation</name>
        <dbReference type="ChEBI" id="CHEBI:23378"/>
        <note>catalytic</note>
    </ligand>
</feature>
<feature type="binding site" evidence="1">
    <location>
        <position position="62"/>
    </location>
    <ligand>
        <name>Cu cation</name>
        <dbReference type="ChEBI" id="CHEBI:23378"/>
        <note>catalytic</note>
    </ligand>
</feature>
<feature type="binding site" evidence="1">
    <location>
        <position position="62"/>
    </location>
    <ligand>
        <name>Zn(2+)</name>
        <dbReference type="ChEBI" id="CHEBI:29105"/>
        <note>structural</note>
    </ligand>
</feature>
<feature type="binding site" evidence="1">
    <location>
        <position position="70"/>
    </location>
    <ligand>
        <name>Zn(2+)</name>
        <dbReference type="ChEBI" id="CHEBI:29105"/>
        <note>structural</note>
    </ligand>
</feature>
<feature type="binding site" evidence="1">
    <location>
        <position position="79"/>
    </location>
    <ligand>
        <name>Zn(2+)</name>
        <dbReference type="ChEBI" id="CHEBI:29105"/>
        <note>structural</note>
    </ligand>
</feature>
<feature type="binding site" evidence="1">
    <location>
        <position position="82"/>
    </location>
    <ligand>
        <name>Zn(2+)</name>
        <dbReference type="ChEBI" id="CHEBI:29105"/>
        <note>structural</note>
    </ligand>
</feature>
<feature type="binding site" evidence="1">
    <location>
        <position position="119"/>
    </location>
    <ligand>
        <name>Cu cation</name>
        <dbReference type="ChEBI" id="CHEBI:23378"/>
        <note>catalytic</note>
    </ligand>
</feature>
<feature type="disulfide bond" evidence="1">
    <location>
        <begin position="56"/>
        <end position="145"/>
    </location>
</feature>
<keyword id="KW-0049">Antioxidant</keyword>
<keyword id="KW-0186">Copper</keyword>
<keyword id="KW-0963">Cytoplasm</keyword>
<keyword id="KW-1015">Disulfide bond</keyword>
<keyword id="KW-0479">Metal-binding</keyword>
<keyword id="KW-0560">Oxidoreductase</keyword>
<keyword id="KW-1185">Reference proteome</keyword>
<keyword id="KW-0862">Zinc</keyword>
<sequence length="152" mass="15115">MVKAVAVLGSSEGVKGTIFFTQEGDGPTTVTGSVSGLKPGLHGFHVHALGDTTNGCMSTGPHYNPASKEHGAPEDENRHAGDLGNVTAGADGVANINVTDSQIPLTGPNSIIGRAVVVHADPDDLGKGGHELSKSTGNAGGRVACGIIGLQG</sequence>
<proteinExistence type="evidence at transcript level"/>
<dbReference type="EC" id="1.15.1.1"/>
<dbReference type="EMBL" id="X17564">
    <property type="status" value="NOT_ANNOTATED_CDS"/>
    <property type="molecule type" value="mRNA"/>
</dbReference>
<dbReference type="PIR" id="S07007">
    <property type="entry name" value="S07007"/>
</dbReference>
<dbReference type="RefSeq" id="NP_001105704.1">
    <property type="nucleotide sequence ID" value="NM_001112234.1"/>
</dbReference>
<dbReference type="SMR" id="P23345"/>
<dbReference type="FunCoup" id="P23345">
    <property type="interactions" value="2040"/>
</dbReference>
<dbReference type="STRING" id="4577.P23345"/>
<dbReference type="KEGG" id="zma:542722"/>
<dbReference type="MaizeGDB" id="47586"/>
<dbReference type="InParanoid" id="P23345"/>
<dbReference type="OrthoDB" id="2015551at2759"/>
<dbReference type="Proteomes" id="UP000007305">
    <property type="component" value="Unplaced"/>
</dbReference>
<dbReference type="ExpressionAtlas" id="P23345">
    <property type="expression patterns" value="baseline and differential"/>
</dbReference>
<dbReference type="GO" id="GO:0005737">
    <property type="term" value="C:cytoplasm"/>
    <property type="evidence" value="ECO:0007669"/>
    <property type="project" value="UniProtKB-SubCell"/>
</dbReference>
<dbReference type="GO" id="GO:0005507">
    <property type="term" value="F:copper ion binding"/>
    <property type="evidence" value="ECO:0000318"/>
    <property type="project" value="GO_Central"/>
</dbReference>
<dbReference type="GO" id="GO:0004784">
    <property type="term" value="F:superoxide dismutase activity"/>
    <property type="evidence" value="ECO:0000318"/>
    <property type="project" value="GO_Central"/>
</dbReference>
<dbReference type="GO" id="GO:0019430">
    <property type="term" value="P:removal of superoxide radicals"/>
    <property type="evidence" value="ECO:0000318"/>
    <property type="project" value="GO_Central"/>
</dbReference>
<dbReference type="CDD" id="cd00305">
    <property type="entry name" value="Cu-Zn_Superoxide_Dismutase"/>
    <property type="match status" value="1"/>
</dbReference>
<dbReference type="FunFam" id="2.60.40.200:FF:000001">
    <property type="entry name" value="Superoxide dismutase [Cu-Zn]"/>
    <property type="match status" value="1"/>
</dbReference>
<dbReference type="Gene3D" id="2.60.40.200">
    <property type="entry name" value="Superoxide dismutase, copper/zinc binding domain"/>
    <property type="match status" value="1"/>
</dbReference>
<dbReference type="InterPro" id="IPR036423">
    <property type="entry name" value="SOD-like_Cu/Zn_dom_sf"/>
</dbReference>
<dbReference type="InterPro" id="IPR024134">
    <property type="entry name" value="SOD_Cu/Zn_/chaperone"/>
</dbReference>
<dbReference type="InterPro" id="IPR018152">
    <property type="entry name" value="SOD_Cu/Zn_BS"/>
</dbReference>
<dbReference type="InterPro" id="IPR001424">
    <property type="entry name" value="SOD_Cu_Zn_dom"/>
</dbReference>
<dbReference type="PANTHER" id="PTHR10003">
    <property type="entry name" value="SUPEROXIDE DISMUTASE CU-ZN -RELATED"/>
    <property type="match status" value="1"/>
</dbReference>
<dbReference type="Pfam" id="PF00080">
    <property type="entry name" value="Sod_Cu"/>
    <property type="match status" value="1"/>
</dbReference>
<dbReference type="PRINTS" id="PR00068">
    <property type="entry name" value="CUZNDISMTASE"/>
</dbReference>
<dbReference type="SUPFAM" id="SSF49329">
    <property type="entry name" value="Cu,Zn superoxide dismutase-like"/>
    <property type="match status" value="1"/>
</dbReference>
<dbReference type="PROSITE" id="PS00087">
    <property type="entry name" value="SOD_CU_ZN_1"/>
    <property type="match status" value="1"/>
</dbReference>
<dbReference type="PROSITE" id="PS00332">
    <property type="entry name" value="SOD_CU_ZN_2"/>
    <property type="match status" value="1"/>
</dbReference>
<comment type="function">
    <text>Destroys radicals which are normally produced within the cells and which are toxic to biological systems.</text>
</comment>
<comment type="catalytic activity">
    <reaction>
        <text>2 superoxide + 2 H(+) = H2O2 + O2</text>
        <dbReference type="Rhea" id="RHEA:20696"/>
        <dbReference type="ChEBI" id="CHEBI:15378"/>
        <dbReference type="ChEBI" id="CHEBI:15379"/>
        <dbReference type="ChEBI" id="CHEBI:16240"/>
        <dbReference type="ChEBI" id="CHEBI:18421"/>
        <dbReference type="EC" id="1.15.1.1"/>
    </reaction>
</comment>
<comment type="cofactor">
    <cofactor evidence="1">
        <name>Cu cation</name>
        <dbReference type="ChEBI" id="CHEBI:23378"/>
    </cofactor>
    <text evidence="1">Binds 1 copper ion per subunit.</text>
</comment>
<comment type="cofactor">
    <cofactor evidence="1">
        <name>Zn(2+)</name>
        <dbReference type="ChEBI" id="CHEBI:29105"/>
    </cofactor>
    <text evidence="1">Binds 1 zinc ion per subunit.</text>
</comment>
<comment type="subunit">
    <text>Homodimer.</text>
</comment>
<comment type="subcellular location">
    <subcellularLocation>
        <location>Cytoplasm</location>
    </subcellularLocation>
</comment>
<comment type="similarity">
    <text evidence="2">Belongs to the Cu-Zn superoxide dismutase family.</text>
</comment>
<organism>
    <name type="scientific">Zea mays</name>
    <name type="common">Maize</name>
    <dbReference type="NCBI Taxonomy" id="4577"/>
    <lineage>
        <taxon>Eukaryota</taxon>
        <taxon>Viridiplantae</taxon>
        <taxon>Streptophyta</taxon>
        <taxon>Embryophyta</taxon>
        <taxon>Tracheophyta</taxon>
        <taxon>Spermatophyta</taxon>
        <taxon>Magnoliopsida</taxon>
        <taxon>Liliopsida</taxon>
        <taxon>Poales</taxon>
        <taxon>Poaceae</taxon>
        <taxon>PACMAD clade</taxon>
        <taxon>Panicoideae</taxon>
        <taxon>Andropogonodae</taxon>
        <taxon>Andropogoneae</taxon>
        <taxon>Tripsacinae</taxon>
        <taxon>Zea</taxon>
    </lineage>
</organism>
<name>SODC4_MAIZE</name>
<evidence type="ECO:0000250" key="1"/>
<evidence type="ECO:0000305" key="2"/>
<gene>
    <name type="primary">SODCC.3</name>
    <name type="synonym">SOD4A</name>
</gene>
<protein>
    <recommendedName>
        <fullName>Superoxide dismutase [Cu-Zn] 4A</fullName>
        <ecNumber>1.15.1.1</ecNumber>
    </recommendedName>
</protein>
<reference key="1">
    <citation type="journal article" date="1989" name="Mol. Gen. Genet.">
        <title>Two cDNAs encode two nearly identical Cu/Zn superoxide dismutase proteins in maize.</title>
        <authorList>
            <person name="Cannon R.E."/>
            <person name="Scandalios J.G."/>
        </authorList>
    </citation>
    <scope>NUCLEOTIDE SEQUENCE [MRNA]</scope>
</reference>
<accession>P23345</accession>